<name>T2R50_PONPY</name>
<accession>Q645V7</accession>
<gene>
    <name type="primary">TAS2R50</name>
</gene>
<proteinExistence type="inferred from homology"/>
<organism>
    <name type="scientific">Pongo pygmaeus</name>
    <name type="common">Bornean orangutan</name>
    <dbReference type="NCBI Taxonomy" id="9600"/>
    <lineage>
        <taxon>Eukaryota</taxon>
        <taxon>Metazoa</taxon>
        <taxon>Chordata</taxon>
        <taxon>Craniata</taxon>
        <taxon>Vertebrata</taxon>
        <taxon>Euteleostomi</taxon>
        <taxon>Mammalia</taxon>
        <taxon>Eutheria</taxon>
        <taxon>Euarchontoglires</taxon>
        <taxon>Primates</taxon>
        <taxon>Haplorrhini</taxon>
        <taxon>Catarrhini</taxon>
        <taxon>Hominidae</taxon>
        <taxon>Pongo</taxon>
    </lineage>
</organism>
<reference key="1">
    <citation type="journal article" date="2005" name="Mol. Biol. Evol.">
        <title>Evolution of bitter taste receptors in humans and apes.</title>
        <authorList>
            <person name="Fischer A."/>
            <person name="Gilad Y."/>
            <person name="Man O."/>
            <person name="Paeaebo S."/>
        </authorList>
    </citation>
    <scope>NUCLEOTIDE SEQUENCE [GENOMIC DNA]</scope>
</reference>
<sequence length="299" mass="34247">MVTFLHIFFSILILVLFVLGNFANGFIALVNFIDLVKRKKISSADQILTALAVSRIGLLWALLLNWYLTVLNPAFYSVELRITSYNAWVVTNHFSMWLAASLSIFYLLKIANFSNLIFLHLKRRVRSVILVILLGPLTFLVCHLFVANMDESMSAEEYEGNMTGKLKLRNTVHLSYLTVTTLWSFIPFTLSLISFLMLICSLCKHVKKMQLHGEGSQDLSTKVHIKALQTLISFLLLCAIFFLFLIISIWNPRRLQNDPVVVVSKAVGNIYLALDSFILIWRTKKLKHTFLLILCQIRC</sequence>
<dbReference type="EMBL" id="AY724970">
    <property type="protein sequence ID" value="AAU21162.1"/>
    <property type="molecule type" value="Genomic_DNA"/>
</dbReference>
<dbReference type="SMR" id="Q645V7"/>
<dbReference type="GlyCosmos" id="Q645V7">
    <property type="glycosylation" value="1 site, No reported glycans"/>
</dbReference>
<dbReference type="GO" id="GO:0005886">
    <property type="term" value="C:plasma membrane"/>
    <property type="evidence" value="ECO:0007669"/>
    <property type="project" value="UniProtKB-ARBA"/>
</dbReference>
<dbReference type="GO" id="GO:0033038">
    <property type="term" value="F:bitter taste receptor activity"/>
    <property type="evidence" value="ECO:0007669"/>
    <property type="project" value="InterPro"/>
</dbReference>
<dbReference type="GO" id="GO:0004930">
    <property type="term" value="F:G protein-coupled receptor activity"/>
    <property type="evidence" value="ECO:0007669"/>
    <property type="project" value="UniProtKB-KW"/>
</dbReference>
<dbReference type="CDD" id="cd15027">
    <property type="entry name" value="7tm_TAS2R43-like"/>
    <property type="match status" value="1"/>
</dbReference>
<dbReference type="FunFam" id="1.20.1070.10:FF:000042">
    <property type="entry name" value="Taste receptor type 2 member 7"/>
    <property type="match status" value="1"/>
</dbReference>
<dbReference type="Gene3D" id="1.20.1070.10">
    <property type="entry name" value="Rhodopsin 7-helix transmembrane proteins"/>
    <property type="match status" value="1"/>
</dbReference>
<dbReference type="InterPro" id="IPR007960">
    <property type="entry name" value="TAS2R"/>
</dbReference>
<dbReference type="PANTHER" id="PTHR11394">
    <property type="entry name" value="TASTE RECEPTOR TYPE 2"/>
    <property type="match status" value="1"/>
</dbReference>
<dbReference type="PANTHER" id="PTHR11394:SF43">
    <property type="entry name" value="TASTE RECEPTOR TYPE 2 MEMBER 50"/>
    <property type="match status" value="1"/>
</dbReference>
<dbReference type="Pfam" id="PF05296">
    <property type="entry name" value="TAS2R"/>
    <property type="match status" value="1"/>
</dbReference>
<dbReference type="SUPFAM" id="SSF81321">
    <property type="entry name" value="Family A G protein-coupled receptor-like"/>
    <property type="match status" value="1"/>
</dbReference>
<comment type="function">
    <text evidence="1">Receptor that may play a role in the perception of bitterness and is gustducin-linked. May play a role in sensing the chemical composition of the gastrointestinal content. The activity of this receptor may stimulate alpha gustducin, mediate PLC-beta-2 activation and lead to the gating of TRPM5 (By similarity).</text>
</comment>
<comment type="subcellular location">
    <subcellularLocation>
        <location>Membrane</location>
        <topology>Multi-pass membrane protein</topology>
    </subcellularLocation>
</comment>
<comment type="miscellaneous">
    <text>Most taste cells may be activated by a limited number of bitter compounds; individual taste cells can discriminate among bitter stimuli.</text>
</comment>
<comment type="similarity">
    <text evidence="3">Belongs to the G-protein coupled receptor T2R family.</text>
</comment>
<protein>
    <recommendedName>
        <fullName>Taste receptor type 2 member 50</fullName>
        <shortName>T2R50</shortName>
    </recommendedName>
</protein>
<feature type="chain" id="PRO_0000082342" description="Taste receptor type 2 member 50">
    <location>
        <begin position="1"/>
        <end position="299"/>
    </location>
</feature>
<feature type="topological domain" description="Extracellular" evidence="2">
    <location>
        <position position="1"/>
    </location>
</feature>
<feature type="transmembrane region" description="Helical; Name=1" evidence="2">
    <location>
        <begin position="2"/>
        <end position="22"/>
    </location>
</feature>
<feature type="topological domain" description="Cytoplasmic" evidence="2">
    <location>
        <begin position="23"/>
        <end position="55"/>
    </location>
</feature>
<feature type="transmembrane region" description="Helical; Name=2" evidence="2">
    <location>
        <begin position="56"/>
        <end position="76"/>
    </location>
</feature>
<feature type="topological domain" description="Extracellular" evidence="2">
    <location>
        <begin position="77"/>
        <end position="87"/>
    </location>
</feature>
<feature type="transmembrane region" description="Helical; Name=3" evidence="2">
    <location>
        <begin position="88"/>
        <end position="108"/>
    </location>
</feature>
<feature type="topological domain" description="Cytoplasmic" evidence="2">
    <location>
        <begin position="109"/>
        <end position="126"/>
    </location>
</feature>
<feature type="transmembrane region" description="Helical; Name=4" evidence="2">
    <location>
        <begin position="127"/>
        <end position="147"/>
    </location>
</feature>
<feature type="topological domain" description="Extracellular" evidence="2">
    <location>
        <begin position="148"/>
        <end position="181"/>
    </location>
</feature>
<feature type="transmembrane region" description="Helical; Name=5" evidence="2">
    <location>
        <begin position="182"/>
        <end position="202"/>
    </location>
</feature>
<feature type="topological domain" description="Cytoplasmic" evidence="2">
    <location>
        <begin position="203"/>
        <end position="229"/>
    </location>
</feature>
<feature type="transmembrane region" description="Helical; Name=6" evidence="2">
    <location>
        <begin position="230"/>
        <end position="250"/>
    </location>
</feature>
<feature type="topological domain" description="Extracellular" evidence="2">
    <location>
        <begin position="251"/>
        <end position="259"/>
    </location>
</feature>
<feature type="transmembrane region" description="Helical; Name=7" evidence="2">
    <location>
        <begin position="260"/>
        <end position="280"/>
    </location>
</feature>
<feature type="topological domain" description="Cytoplasmic" evidence="2">
    <location>
        <begin position="281"/>
        <end position="299"/>
    </location>
</feature>
<feature type="glycosylation site" description="N-linked (GlcNAc...) asparagine" evidence="2">
    <location>
        <position position="161"/>
    </location>
</feature>
<keyword id="KW-0297">G-protein coupled receptor</keyword>
<keyword id="KW-0325">Glycoprotein</keyword>
<keyword id="KW-0472">Membrane</keyword>
<keyword id="KW-0675">Receptor</keyword>
<keyword id="KW-0716">Sensory transduction</keyword>
<keyword id="KW-0919">Taste</keyword>
<keyword id="KW-0807">Transducer</keyword>
<keyword id="KW-0812">Transmembrane</keyword>
<keyword id="KW-1133">Transmembrane helix</keyword>
<evidence type="ECO:0000250" key="1"/>
<evidence type="ECO:0000255" key="2"/>
<evidence type="ECO:0000305" key="3"/>